<feature type="chain" id="PRO_0000191055" description="Solute carrier organic anion transporter family member 1C1">
    <location>
        <begin position="1"/>
        <end position="602"/>
    </location>
</feature>
<feature type="topological domain" description="Cytoplasmic" evidence="3">
    <location>
        <begin position="1"/>
        <end position="43"/>
    </location>
</feature>
<feature type="transmembrane region" description="Helical" evidence="3">
    <location>
        <begin position="44"/>
        <end position="63"/>
    </location>
</feature>
<feature type="topological domain" description="Extracellular" evidence="3">
    <location>
        <begin position="64"/>
        <end position="82"/>
    </location>
</feature>
<feature type="transmembrane region" description="Helical" evidence="3">
    <location>
        <begin position="83"/>
        <end position="103"/>
    </location>
</feature>
<feature type="topological domain" description="Cytoplasmic" evidence="3">
    <location>
        <begin position="104"/>
        <end position="109"/>
    </location>
</feature>
<feature type="transmembrane region" description="Helical" evidence="3">
    <location>
        <begin position="110"/>
        <end position="134"/>
    </location>
</feature>
<feature type="topological domain" description="Extracellular" evidence="3">
    <location>
        <begin position="135"/>
        <end position="139"/>
    </location>
</feature>
<feature type="transmembrane region" description="Helical" evidence="3">
    <location>
        <begin position="140"/>
        <end position="156"/>
    </location>
</feature>
<feature type="topological domain" description="Cytoplasmic" evidence="3">
    <location>
        <begin position="157"/>
        <end position="238"/>
    </location>
</feature>
<feature type="transmembrane region" description="Helical" evidence="3">
    <location>
        <begin position="239"/>
        <end position="260"/>
    </location>
</feature>
<feature type="topological domain" description="Extracellular" evidence="3">
    <location>
        <begin position="261"/>
        <end position="280"/>
    </location>
</feature>
<feature type="transmembrane region" description="Helical" evidence="3">
    <location>
        <begin position="281"/>
        <end position="304"/>
    </location>
</feature>
<feature type="topological domain" description="Cytoplasmic" evidence="3">
    <location>
        <begin position="305"/>
        <end position="308"/>
    </location>
</feature>
<feature type="transmembrane region" description="Helical" evidence="3">
    <location>
        <begin position="309"/>
        <end position="332"/>
    </location>
</feature>
<feature type="topological domain" description="Extracellular" evidence="3">
    <location>
        <begin position="333"/>
        <end position="444"/>
    </location>
</feature>
<feature type="transmembrane region" description="Helical" evidence="3">
    <location>
        <begin position="445"/>
        <end position="467"/>
    </location>
</feature>
<feature type="topological domain" description="Cytoplasmic" evidence="3">
    <location>
        <begin position="468"/>
        <end position="476"/>
    </location>
</feature>
<feature type="transmembrane region" description="Helical" evidence="3">
    <location>
        <begin position="477"/>
        <end position="502"/>
    </location>
</feature>
<feature type="topological domain" description="Extracellular" evidence="3">
    <location>
        <begin position="503"/>
        <end position="536"/>
    </location>
</feature>
<feature type="transmembrane region" description="Helical" evidence="3">
    <location>
        <begin position="537"/>
        <end position="554"/>
    </location>
</feature>
<feature type="topological domain" description="Cytoplasmic" evidence="3">
    <location>
        <begin position="555"/>
        <end position="602"/>
    </location>
</feature>
<feature type="domain" description="Kazal-like" evidence="4">
    <location>
        <begin position="360"/>
        <end position="415"/>
    </location>
</feature>
<feature type="region of interest" description="Disordered" evidence="5">
    <location>
        <begin position="190"/>
        <end position="216"/>
    </location>
</feature>
<feature type="compositionally biased region" description="Basic and acidic residues" evidence="5">
    <location>
        <begin position="193"/>
        <end position="214"/>
    </location>
</feature>
<feature type="glycosylation site" description="N-linked (GlcNAc...) asparagine" evidence="3">
    <location>
        <position position="400"/>
    </location>
</feature>
<feature type="glycosylation site" description="N-linked (GlcNAc...) asparagine" evidence="3">
    <location>
        <position position="410"/>
    </location>
</feature>
<feature type="glycosylation site" description="N-linked (GlcNAc...) asparagine" evidence="3">
    <location>
        <position position="423"/>
    </location>
</feature>
<feature type="disulfide bond" evidence="4">
    <location>
        <begin position="366"/>
        <end position="396"/>
    </location>
</feature>
<feature type="disulfide bond" evidence="4">
    <location>
        <begin position="372"/>
        <end position="392"/>
    </location>
</feature>
<feature type="disulfide bond" evidence="4">
    <location>
        <begin position="381"/>
        <end position="413"/>
    </location>
</feature>
<comment type="function">
    <text evidence="2">Mediates the Na(+)-independent high affinity transport of organic anions such as the thyroid hormones L-thyroxine (T4), L-thyroxine sulfate (T4S), and 3,3',5'-triiodo-L-thyronine (reverse T3, rT3) at the plasma membrane. Regulates T4 levels in different brain regions by transporting T4, and also by serving as an export pump for T4S, which is a source of T4 after hydrolysis by local sulfatases. Increases the access of these substrates to the intracellular sites where they are metabolized by the deiodinases. Other potential substrates, such as triiodothyronine (T3), 17-beta-glucuronosyl estradiol (17beta-estradiol 17-O-(beta-D-glucuronate)), estrone-3-sulfate (E1S) and sulfobromophthalein (BSP) are transported with much lower efficiency. Transports T4 and E1S in a pH-insensitive manner. Facilitates the transport of thyroid hormones across the blood-brain barrier and into glia and neuronal cells in the brain.</text>
</comment>
<comment type="catalytic activity">
    <reaction evidence="2">
        <text>3,3',5'-triiodo-L-thyronine(out) = 3,3',5'-triiodo-L-thyronine(in)</text>
        <dbReference type="Rhea" id="RHEA:71815"/>
        <dbReference type="ChEBI" id="CHEBI:57261"/>
    </reaction>
</comment>
<comment type="catalytic activity">
    <reaction evidence="2">
        <text>L-thyroxine(out) = L-thyroxine(in)</text>
        <dbReference type="Rhea" id="RHEA:71819"/>
        <dbReference type="ChEBI" id="CHEBI:58448"/>
    </reaction>
</comment>
<comment type="catalytic activity">
    <reaction evidence="2">
        <text>L-thyroxine sulfate(out) = L-thyroxine sulfate(in)</text>
        <dbReference type="Rhea" id="RHEA:73311"/>
        <dbReference type="ChEBI" id="CHEBI:176512"/>
    </reaction>
</comment>
<comment type="subcellular location">
    <subcellularLocation>
        <location>Cell membrane</location>
        <topology>Multi-pass membrane protein</topology>
    </subcellularLocation>
    <text evidence="1">Expressed in both luminal and abluminal membranes of brain capillary endothelial cells. Localized to the apical membrane and basal surfaces of choroid plexus (By similarity).</text>
</comment>
<comment type="similarity">
    <text evidence="6">Belongs to the organo anion transporter (TC 2.A.60) family.</text>
</comment>
<reference key="1">
    <citation type="submission" date="2000-08" db="EMBL/GenBank/DDBJ databases">
        <title>Isolation of full-length cDNA clones from macaque brain cDNA libraries.</title>
        <authorList>
            <person name="Osada N."/>
            <person name="Hida M."/>
            <person name="Kusuda J."/>
            <person name="Tanuma R."/>
            <person name="Iseki K."/>
            <person name="Hirai M."/>
            <person name="Terao K."/>
            <person name="Suzuki Y."/>
            <person name="Sugano S."/>
            <person name="Hashimoto K."/>
        </authorList>
    </citation>
    <scope>NUCLEOTIDE SEQUENCE [LARGE SCALE MRNA]</scope>
    <source>
        <tissue>Parietal cortex</tissue>
    </source>
</reference>
<protein>
    <recommendedName>
        <fullName>Solute carrier organic anion transporter family member 1C1</fullName>
    </recommendedName>
    <alternativeName>
        <fullName>Solute carrier family 21 member 14</fullName>
    </alternativeName>
    <alternativeName>
        <fullName>Thyroxine transporter</fullName>
    </alternativeName>
</protein>
<organism>
    <name type="scientific">Macaca fascicularis</name>
    <name type="common">Crab-eating macaque</name>
    <name type="synonym">Cynomolgus monkey</name>
    <dbReference type="NCBI Taxonomy" id="9541"/>
    <lineage>
        <taxon>Eukaryota</taxon>
        <taxon>Metazoa</taxon>
        <taxon>Chordata</taxon>
        <taxon>Craniata</taxon>
        <taxon>Vertebrata</taxon>
        <taxon>Euteleostomi</taxon>
        <taxon>Mammalia</taxon>
        <taxon>Eutheria</taxon>
        <taxon>Euarchontoglires</taxon>
        <taxon>Primates</taxon>
        <taxon>Haplorrhini</taxon>
        <taxon>Catarrhini</taxon>
        <taxon>Cercopithecidae</taxon>
        <taxon>Cercopithecinae</taxon>
        <taxon>Macaca</taxon>
    </lineage>
</organism>
<sequence>MDTSSKENIQLFCKTSVQPVGRPSFKTEYPSSEEKQPCCGELKVFLGALSFVYFAKALAEGYLKSTITQIERRFDIPSSLVGVIDGSFEIGNLLVITFVSYFGAKLHRPKIIGAGCLIMGVGTLLIAMPQFFMEQYKYEIYSPSSNSTLSISPCLLESSSQLPVSVMEKSKSKISLLAAVPFWYLPKSLPRSQSREDSNSSSEKSKFIRDDHTDYQTPQGENVKIMEMARDFLPSLKYLFGNPVYFLYLCTSTVQFNSLFGMVTYKPKYIEQQYGQSSSRANFVIGLINIPAVALGIFSGGIAMKKFRISVCGAAKLYLGSSVFGYLLFLSLFALGCENSDVAGLTVSYQGTKPVSYHERALFSDCNPRCKCSETKWEPMCGENGITYVSACPAGCQTSNRSGKNIIFYNCTCVGIAASKSGNSSGIVGRCQKDNGCPQMFLYFLVISVITSYTLSLGGIPGYILLLRCIKPQLKSFALGIYTLSIRVLAGIPAPVYFGVLIDTSCLKWGFKRCGSRGSCRLYDSNVFRHIYLGLTVILGTVSIFLSIAVLFILKKNYVSKHRNFITKRERTMVSTRFQKENCTTSDHLLQPKYWPGKETQL</sequence>
<accession>Q9GMU6</accession>
<gene>
    <name type="primary">SLCO1C1</name>
    <name type="synonym">OATP1C1</name>
    <name type="synonym">SLC21A14</name>
    <name type="ORF">QnpA-13170</name>
</gene>
<dbReference type="EMBL" id="AB047629">
    <property type="protein sequence ID" value="BAB12153.1"/>
    <property type="molecule type" value="mRNA"/>
</dbReference>
<dbReference type="SMR" id="Q9GMU6"/>
<dbReference type="STRING" id="9541.ENSMFAP00000018356"/>
<dbReference type="GlyCosmos" id="Q9GMU6">
    <property type="glycosylation" value="3 sites, No reported glycans"/>
</dbReference>
<dbReference type="eggNOG" id="KOG3626">
    <property type="taxonomic scope" value="Eukaryota"/>
</dbReference>
<dbReference type="Proteomes" id="UP000233100">
    <property type="component" value="Unplaced"/>
</dbReference>
<dbReference type="GO" id="GO:0016323">
    <property type="term" value="C:basolateral plasma membrane"/>
    <property type="evidence" value="ECO:0007669"/>
    <property type="project" value="TreeGrafter"/>
</dbReference>
<dbReference type="GO" id="GO:0015125">
    <property type="term" value="F:bile acid transmembrane transporter activity"/>
    <property type="evidence" value="ECO:0007669"/>
    <property type="project" value="TreeGrafter"/>
</dbReference>
<dbReference type="GO" id="GO:0008514">
    <property type="term" value="F:organic anion transmembrane transporter activity"/>
    <property type="evidence" value="ECO:0000250"/>
    <property type="project" value="UniProtKB"/>
</dbReference>
<dbReference type="GO" id="GO:0015347">
    <property type="term" value="F:sodium-independent organic anion transmembrane transporter activity"/>
    <property type="evidence" value="ECO:0007669"/>
    <property type="project" value="TreeGrafter"/>
</dbReference>
<dbReference type="GO" id="GO:0006811">
    <property type="term" value="P:monoatomic ion transport"/>
    <property type="evidence" value="ECO:0007669"/>
    <property type="project" value="UniProtKB-KW"/>
</dbReference>
<dbReference type="GO" id="GO:0043252">
    <property type="term" value="P:sodium-independent organic anion transport"/>
    <property type="evidence" value="ECO:0007669"/>
    <property type="project" value="TreeGrafter"/>
</dbReference>
<dbReference type="FunFam" id="1.20.1250.20:FF:000407">
    <property type="entry name" value="Solute carrier organic anion transporter family member"/>
    <property type="match status" value="1"/>
</dbReference>
<dbReference type="FunFam" id="3.30.60.30:FF:000048">
    <property type="entry name" value="Solute carrier organic anion transporter family member"/>
    <property type="match status" value="1"/>
</dbReference>
<dbReference type="Gene3D" id="1.20.1250.20">
    <property type="entry name" value="MFS general substrate transporter like domains"/>
    <property type="match status" value="2"/>
</dbReference>
<dbReference type="InterPro" id="IPR002350">
    <property type="entry name" value="Kazal_dom"/>
</dbReference>
<dbReference type="InterPro" id="IPR036058">
    <property type="entry name" value="Kazal_dom_sf"/>
</dbReference>
<dbReference type="InterPro" id="IPR036259">
    <property type="entry name" value="MFS_trans_sf"/>
</dbReference>
<dbReference type="InterPro" id="IPR004156">
    <property type="entry name" value="OATP"/>
</dbReference>
<dbReference type="NCBIfam" id="TIGR00805">
    <property type="entry name" value="oat"/>
    <property type="match status" value="1"/>
</dbReference>
<dbReference type="PANTHER" id="PTHR11388">
    <property type="entry name" value="ORGANIC ANION TRANSPORTER"/>
    <property type="match status" value="1"/>
</dbReference>
<dbReference type="PANTHER" id="PTHR11388:SF99">
    <property type="entry name" value="SOLUTE CARRIER ORGANIC ANION TRANSPORTER FAMILY MEMBER 1C1"/>
    <property type="match status" value="1"/>
</dbReference>
<dbReference type="Pfam" id="PF07648">
    <property type="entry name" value="Kazal_2"/>
    <property type="match status" value="1"/>
</dbReference>
<dbReference type="Pfam" id="PF03137">
    <property type="entry name" value="OATP"/>
    <property type="match status" value="2"/>
</dbReference>
<dbReference type="SUPFAM" id="SSF100895">
    <property type="entry name" value="Kazal-type serine protease inhibitors"/>
    <property type="match status" value="1"/>
</dbReference>
<dbReference type="SUPFAM" id="SSF103473">
    <property type="entry name" value="MFS general substrate transporter"/>
    <property type="match status" value="2"/>
</dbReference>
<dbReference type="PROSITE" id="PS51465">
    <property type="entry name" value="KAZAL_2"/>
    <property type="match status" value="1"/>
</dbReference>
<keyword id="KW-1003">Cell membrane</keyword>
<keyword id="KW-1015">Disulfide bond</keyword>
<keyword id="KW-0325">Glycoprotein</keyword>
<keyword id="KW-0406">Ion transport</keyword>
<keyword id="KW-0445">Lipid transport</keyword>
<keyword id="KW-0472">Membrane</keyword>
<keyword id="KW-1185">Reference proteome</keyword>
<keyword id="KW-0812">Transmembrane</keyword>
<keyword id="KW-1133">Transmembrane helix</keyword>
<keyword id="KW-0813">Transport</keyword>
<evidence type="ECO:0000250" key="1"/>
<evidence type="ECO:0000250" key="2">
    <source>
        <dbReference type="UniProtKB" id="Q9NYB5"/>
    </source>
</evidence>
<evidence type="ECO:0000255" key="3"/>
<evidence type="ECO:0000255" key="4">
    <source>
        <dbReference type="PROSITE-ProRule" id="PRU00798"/>
    </source>
</evidence>
<evidence type="ECO:0000256" key="5">
    <source>
        <dbReference type="SAM" id="MobiDB-lite"/>
    </source>
</evidence>
<evidence type="ECO:0000305" key="6"/>
<name>SO1C1_MACFA</name>
<proteinExistence type="evidence at transcript level"/>